<comment type="function">
    <text evidence="1">Catalyzes the transfer of a dimethylallyl group onto the adenine at position 37 in tRNAs that read codons beginning with uridine, leading to the formation of N6-(dimethylallyl)adenosine (i(6)A).</text>
</comment>
<comment type="catalytic activity">
    <reaction evidence="1">
        <text>adenosine(37) in tRNA + dimethylallyl diphosphate = N(6)-dimethylallyladenosine(37) in tRNA + diphosphate</text>
        <dbReference type="Rhea" id="RHEA:26482"/>
        <dbReference type="Rhea" id="RHEA-COMP:10162"/>
        <dbReference type="Rhea" id="RHEA-COMP:10375"/>
        <dbReference type="ChEBI" id="CHEBI:33019"/>
        <dbReference type="ChEBI" id="CHEBI:57623"/>
        <dbReference type="ChEBI" id="CHEBI:74411"/>
        <dbReference type="ChEBI" id="CHEBI:74415"/>
        <dbReference type="EC" id="2.5.1.75"/>
    </reaction>
</comment>
<comment type="cofactor">
    <cofactor evidence="1">
        <name>Mg(2+)</name>
        <dbReference type="ChEBI" id="CHEBI:18420"/>
    </cofactor>
</comment>
<comment type="subunit">
    <text evidence="1">Monomer.</text>
</comment>
<comment type="similarity">
    <text evidence="1">Belongs to the IPP transferase family.</text>
</comment>
<feature type="chain" id="PRO_0000163898" description="tRNA dimethylallyltransferase">
    <location>
        <begin position="1"/>
        <end position="314"/>
    </location>
</feature>
<feature type="region of interest" description="Interaction with substrate tRNA" evidence="1">
    <location>
        <begin position="36"/>
        <end position="39"/>
    </location>
</feature>
<feature type="binding site" evidence="1">
    <location>
        <begin position="11"/>
        <end position="18"/>
    </location>
    <ligand>
        <name>ATP</name>
        <dbReference type="ChEBI" id="CHEBI:30616"/>
    </ligand>
</feature>
<feature type="binding site" evidence="1">
    <location>
        <begin position="13"/>
        <end position="18"/>
    </location>
    <ligand>
        <name>substrate</name>
    </ligand>
</feature>
<feature type="site" description="Interaction with substrate tRNA" evidence="1">
    <location>
        <position position="102"/>
    </location>
</feature>
<feature type="site" description="Interaction with substrate tRNA" evidence="1">
    <location>
        <position position="124"/>
    </location>
</feature>
<dbReference type="EC" id="2.5.1.75" evidence="1"/>
<dbReference type="EMBL" id="AE002160">
    <property type="protein sequence ID" value="AAF39024.1"/>
    <property type="molecule type" value="Genomic_DNA"/>
</dbReference>
<dbReference type="PIR" id="C81735">
    <property type="entry name" value="C81735"/>
</dbReference>
<dbReference type="SMR" id="Q9PLF7"/>
<dbReference type="KEGG" id="cmu:TC_0147"/>
<dbReference type="eggNOG" id="COG0324">
    <property type="taxonomic scope" value="Bacteria"/>
</dbReference>
<dbReference type="HOGENOM" id="CLU_032616_0_2_0"/>
<dbReference type="Proteomes" id="UP000000800">
    <property type="component" value="Chromosome"/>
</dbReference>
<dbReference type="GO" id="GO:0005524">
    <property type="term" value="F:ATP binding"/>
    <property type="evidence" value="ECO:0007669"/>
    <property type="project" value="UniProtKB-UniRule"/>
</dbReference>
<dbReference type="GO" id="GO:0052381">
    <property type="term" value="F:tRNA dimethylallyltransferase activity"/>
    <property type="evidence" value="ECO:0007669"/>
    <property type="project" value="UniProtKB-UniRule"/>
</dbReference>
<dbReference type="GO" id="GO:0006400">
    <property type="term" value="P:tRNA modification"/>
    <property type="evidence" value="ECO:0007669"/>
    <property type="project" value="TreeGrafter"/>
</dbReference>
<dbReference type="Gene3D" id="1.10.20.140">
    <property type="match status" value="1"/>
</dbReference>
<dbReference type="Gene3D" id="3.40.50.300">
    <property type="entry name" value="P-loop containing nucleotide triphosphate hydrolases"/>
    <property type="match status" value="1"/>
</dbReference>
<dbReference type="HAMAP" id="MF_00185">
    <property type="entry name" value="IPP_trans"/>
    <property type="match status" value="1"/>
</dbReference>
<dbReference type="InterPro" id="IPR039657">
    <property type="entry name" value="Dimethylallyltransferase"/>
</dbReference>
<dbReference type="InterPro" id="IPR018022">
    <property type="entry name" value="IPT"/>
</dbReference>
<dbReference type="InterPro" id="IPR027417">
    <property type="entry name" value="P-loop_NTPase"/>
</dbReference>
<dbReference type="NCBIfam" id="TIGR00174">
    <property type="entry name" value="miaA"/>
    <property type="match status" value="1"/>
</dbReference>
<dbReference type="PANTHER" id="PTHR11088">
    <property type="entry name" value="TRNA DIMETHYLALLYLTRANSFERASE"/>
    <property type="match status" value="1"/>
</dbReference>
<dbReference type="PANTHER" id="PTHR11088:SF60">
    <property type="entry name" value="TRNA DIMETHYLALLYLTRANSFERASE"/>
    <property type="match status" value="1"/>
</dbReference>
<dbReference type="Pfam" id="PF01715">
    <property type="entry name" value="IPPT"/>
    <property type="match status" value="1"/>
</dbReference>
<dbReference type="SUPFAM" id="SSF52540">
    <property type="entry name" value="P-loop containing nucleoside triphosphate hydrolases"/>
    <property type="match status" value="2"/>
</dbReference>
<sequence length="314" mass="35396">MFKRTVILLAGPTGSGKTAVSLKLAPLVDGEIISVDSMQVYQGMDIGTAKVSLAIRQAVPHHLIDICHVQETFNAVDFYYHAIQACQDILSRNKVPILVGGTGFYFHTFLSGPPSGPSPDFALREQLSLEAQERGIGALYQELVELDSAYAATITKHDKNKIIRALEIIRKTGNKVSSYSWESTVNESKEYHCRGWLLSPDPELLRHNILERCDQMLEEGLVDEVRSLVALGIKGNTSASRAIGYREWIEFLDAGSPVERFEDTKQKFITNTWRYTKKQRTWFKRYPLFRELSPMGMTLGDIARKIAQDYFLCG</sequence>
<organism>
    <name type="scientific">Chlamydia muridarum (strain MoPn / Nigg)</name>
    <dbReference type="NCBI Taxonomy" id="243161"/>
    <lineage>
        <taxon>Bacteria</taxon>
        <taxon>Pseudomonadati</taxon>
        <taxon>Chlamydiota</taxon>
        <taxon>Chlamydiia</taxon>
        <taxon>Chlamydiales</taxon>
        <taxon>Chlamydiaceae</taxon>
        <taxon>Chlamydia/Chlamydophila group</taxon>
        <taxon>Chlamydia</taxon>
    </lineage>
</organism>
<evidence type="ECO:0000255" key="1">
    <source>
        <dbReference type="HAMAP-Rule" id="MF_00185"/>
    </source>
</evidence>
<protein>
    <recommendedName>
        <fullName evidence="1">tRNA dimethylallyltransferase</fullName>
        <ecNumber evidence="1">2.5.1.75</ecNumber>
    </recommendedName>
    <alternativeName>
        <fullName evidence="1">Dimethylallyl diphosphate:tRNA dimethylallyltransferase</fullName>
        <shortName evidence="1">DMAPP:tRNA dimethylallyltransferase</shortName>
        <shortName evidence="1">DMATase</shortName>
    </alternativeName>
    <alternativeName>
        <fullName evidence="1">Isopentenyl-diphosphate:tRNA isopentenyltransferase</fullName>
        <shortName evidence="1">IPP transferase</shortName>
        <shortName evidence="1">IPPT</shortName>
        <shortName evidence="1">IPTase</shortName>
    </alternativeName>
</protein>
<reference key="1">
    <citation type="journal article" date="2000" name="Nucleic Acids Res.">
        <title>Genome sequences of Chlamydia trachomatis MoPn and Chlamydia pneumoniae AR39.</title>
        <authorList>
            <person name="Read T.D."/>
            <person name="Brunham R.C."/>
            <person name="Shen C."/>
            <person name="Gill S.R."/>
            <person name="Heidelberg J.F."/>
            <person name="White O."/>
            <person name="Hickey E.K."/>
            <person name="Peterson J.D."/>
            <person name="Utterback T.R."/>
            <person name="Berry K.J."/>
            <person name="Bass S."/>
            <person name="Linher K.D."/>
            <person name="Weidman J.F."/>
            <person name="Khouri H.M."/>
            <person name="Craven B."/>
            <person name="Bowman C."/>
            <person name="Dodson R.J."/>
            <person name="Gwinn M.L."/>
            <person name="Nelson W.C."/>
            <person name="DeBoy R.T."/>
            <person name="Kolonay J.F."/>
            <person name="McClarty G."/>
            <person name="Salzberg S.L."/>
            <person name="Eisen J.A."/>
            <person name="Fraser C.M."/>
        </authorList>
    </citation>
    <scope>NUCLEOTIDE SEQUENCE [LARGE SCALE GENOMIC DNA]</scope>
    <source>
        <strain>MoPn / Nigg</strain>
    </source>
</reference>
<name>MIAA_CHLMU</name>
<keyword id="KW-0067">ATP-binding</keyword>
<keyword id="KW-0460">Magnesium</keyword>
<keyword id="KW-0547">Nucleotide-binding</keyword>
<keyword id="KW-0808">Transferase</keyword>
<keyword id="KW-0819">tRNA processing</keyword>
<accession>Q9PLF7</accession>
<proteinExistence type="inferred from homology"/>
<gene>
    <name evidence="1" type="primary">miaA</name>
    <name type="ordered locus">TC_0147</name>
</gene>